<name>Y034_MYCTU</name>
<gene>
    <name type="ordered locus">Rv0034</name>
    <name type="ORF">MTCY10H4.34</name>
</gene>
<proteinExistence type="evidence at protein level"/>
<feature type="chain" id="PRO_0000103650" description="Uncharacterized protein Rv0034">
    <location>
        <begin position="1"/>
        <end position="131"/>
    </location>
</feature>
<keyword id="KW-1185">Reference proteome</keyword>
<organism>
    <name type="scientific">Mycobacterium tuberculosis (strain ATCC 25618 / H37Rv)</name>
    <dbReference type="NCBI Taxonomy" id="83332"/>
    <lineage>
        <taxon>Bacteria</taxon>
        <taxon>Bacillati</taxon>
        <taxon>Actinomycetota</taxon>
        <taxon>Actinomycetes</taxon>
        <taxon>Mycobacteriales</taxon>
        <taxon>Mycobacteriaceae</taxon>
        <taxon>Mycobacterium</taxon>
        <taxon>Mycobacterium tuberculosis complex</taxon>
    </lineage>
</organism>
<accession>P9WM93</accession>
<accession>L0T5H6</accession>
<accession>P64673</accession>
<accession>P71604</accession>
<dbReference type="EMBL" id="AL123456">
    <property type="protein sequence ID" value="CCP42756.1"/>
    <property type="molecule type" value="Genomic_DNA"/>
</dbReference>
<dbReference type="PIR" id="H70701">
    <property type="entry name" value="H70701"/>
</dbReference>
<dbReference type="RefSeq" id="NP_214548.1">
    <property type="nucleotide sequence ID" value="NC_000962.3"/>
</dbReference>
<dbReference type="RefSeq" id="WP_003400421.1">
    <property type="nucleotide sequence ID" value="NZ_NVQJ01000005.1"/>
</dbReference>
<dbReference type="SMR" id="P9WM93"/>
<dbReference type="STRING" id="83332.Rv0034"/>
<dbReference type="PaxDb" id="83332-Rv0034"/>
<dbReference type="DNASU" id="887046"/>
<dbReference type="GeneID" id="887046"/>
<dbReference type="KEGG" id="mtu:Rv0034"/>
<dbReference type="KEGG" id="mtv:RVBD_0034"/>
<dbReference type="TubercuList" id="Rv0034"/>
<dbReference type="eggNOG" id="COG3631">
    <property type="taxonomic scope" value="Bacteria"/>
</dbReference>
<dbReference type="InParanoid" id="P9WM93"/>
<dbReference type="OrthoDB" id="5176305at2"/>
<dbReference type="Proteomes" id="UP000001584">
    <property type="component" value="Chromosome"/>
</dbReference>
<dbReference type="Gene3D" id="3.10.450.50">
    <property type="match status" value="1"/>
</dbReference>
<dbReference type="InterPro" id="IPR032710">
    <property type="entry name" value="NTF2-like_dom_sf"/>
</dbReference>
<dbReference type="InterPro" id="IPR037401">
    <property type="entry name" value="SnoaL-like"/>
</dbReference>
<dbReference type="Pfam" id="PF12680">
    <property type="entry name" value="SnoaL_2"/>
    <property type="match status" value="1"/>
</dbReference>
<dbReference type="SUPFAM" id="SSF54427">
    <property type="entry name" value="NTF2-like"/>
    <property type="match status" value="1"/>
</dbReference>
<sequence length="131" mass="13968">MTDDADLDLVRRTFAAFARGDLAELTQCFAPDVEQFVPGKHALAGVFRGVDNVVACLGDTAAAADGTMTVTLEDVLSNTDGQVIAVYRLRASRAGKVLDQREAILVTVAGGRITRLSEFYADPAATESFWA</sequence>
<reference key="1">
    <citation type="journal article" date="1998" name="Nature">
        <title>Deciphering the biology of Mycobacterium tuberculosis from the complete genome sequence.</title>
        <authorList>
            <person name="Cole S.T."/>
            <person name="Brosch R."/>
            <person name="Parkhill J."/>
            <person name="Garnier T."/>
            <person name="Churcher C.M."/>
            <person name="Harris D.E."/>
            <person name="Gordon S.V."/>
            <person name="Eiglmeier K."/>
            <person name="Gas S."/>
            <person name="Barry C.E. III"/>
            <person name="Tekaia F."/>
            <person name="Badcock K."/>
            <person name="Basham D."/>
            <person name="Brown D."/>
            <person name="Chillingworth T."/>
            <person name="Connor R."/>
            <person name="Davies R.M."/>
            <person name="Devlin K."/>
            <person name="Feltwell T."/>
            <person name="Gentles S."/>
            <person name="Hamlin N."/>
            <person name="Holroyd S."/>
            <person name="Hornsby T."/>
            <person name="Jagels K."/>
            <person name="Krogh A."/>
            <person name="McLean J."/>
            <person name="Moule S."/>
            <person name="Murphy L.D."/>
            <person name="Oliver S."/>
            <person name="Osborne J."/>
            <person name="Quail M.A."/>
            <person name="Rajandream M.A."/>
            <person name="Rogers J."/>
            <person name="Rutter S."/>
            <person name="Seeger K."/>
            <person name="Skelton S."/>
            <person name="Squares S."/>
            <person name="Squares R."/>
            <person name="Sulston J.E."/>
            <person name="Taylor K."/>
            <person name="Whitehead S."/>
            <person name="Barrell B.G."/>
        </authorList>
    </citation>
    <scope>NUCLEOTIDE SEQUENCE [LARGE SCALE GENOMIC DNA]</scope>
    <source>
        <strain>ATCC 25618 / H37Rv</strain>
    </source>
</reference>
<reference key="2">
    <citation type="journal article" date="2011" name="Mol. Cell. Proteomics">
        <title>Proteogenomic analysis of Mycobacterium tuberculosis by high resolution mass spectrometry.</title>
        <authorList>
            <person name="Kelkar D.S."/>
            <person name="Kumar D."/>
            <person name="Kumar P."/>
            <person name="Balakrishnan L."/>
            <person name="Muthusamy B."/>
            <person name="Yadav A.K."/>
            <person name="Shrivastava P."/>
            <person name="Marimuthu A."/>
            <person name="Anand S."/>
            <person name="Sundaram H."/>
            <person name="Kingsbury R."/>
            <person name="Harsha H.C."/>
            <person name="Nair B."/>
            <person name="Prasad T.S."/>
            <person name="Chauhan D.S."/>
            <person name="Katoch K."/>
            <person name="Katoch V.M."/>
            <person name="Kumar P."/>
            <person name="Chaerkady R."/>
            <person name="Ramachandran S."/>
            <person name="Dash D."/>
            <person name="Pandey A."/>
        </authorList>
    </citation>
    <scope>IDENTIFICATION BY MASS SPECTROMETRY [LARGE SCALE ANALYSIS]</scope>
    <source>
        <strain>ATCC 25618 / H37Rv</strain>
    </source>
</reference>
<protein>
    <recommendedName>
        <fullName>Uncharacterized protein Rv0034</fullName>
    </recommendedName>
</protein>